<accession>Q5R660</accession>
<comment type="function">
    <text evidence="3 4">Mediates cotranslational and post-translational transport of certain precursor polypeptides across endoplasmic reticulum (ER). Proposed to play an auxiliary role in recognition of precursors with short and apolar signal peptides. May cooperate with SEC62 and HSPA5/BiP to facilitate targeting of small presecretory proteins into the SEC61 channel-forming translocon complex, triggering channel opening for polypeptide translocation to the ER lumen (By similarity). Required for efficient PKD1/Polycystin-1 biogenesis and trafficking to the plasma membrane of the primary cilia (By similarity).</text>
</comment>
<comment type="subunit">
    <text evidence="2">The ER translocon complex consists of channel-forming core components SEC61A1, SEC61B and SEC61G and different auxiliary components such as SEC62 and SEC63.</text>
</comment>
<comment type="subcellular location">
    <subcellularLocation>
        <location evidence="1">Endoplasmic reticulum membrane</location>
        <topology evidence="1">Multi-pass membrane protein</topology>
    </subcellularLocation>
</comment>
<feature type="chain" id="PRO_0000292660" description="Translocation protein SEC63 homolog">
    <location>
        <begin position="1"/>
        <end position="761"/>
    </location>
</feature>
<feature type="topological domain" description="Lumenal" evidence="5">
    <location>
        <begin position="1"/>
        <end position="14"/>
    </location>
</feature>
<feature type="transmembrane region" description="Helical" evidence="5">
    <location>
        <begin position="15"/>
        <end position="35"/>
    </location>
</feature>
<feature type="topological domain" description="Cytoplasmic" evidence="5">
    <location>
        <begin position="36"/>
        <end position="69"/>
    </location>
</feature>
<feature type="transmembrane region" description="Helical" evidence="5">
    <location>
        <begin position="70"/>
        <end position="90"/>
    </location>
</feature>
<feature type="topological domain" description="Lumenal" evidence="5">
    <location>
        <begin position="91"/>
        <end position="188"/>
    </location>
</feature>
<feature type="transmembrane region" description="Helical" evidence="5">
    <location>
        <begin position="189"/>
        <end position="209"/>
    </location>
</feature>
<feature type="topological domain" description="Cytoplasmic" evidence="5">
    <location>
        <begin position="210"/>
        <end position="761"/>
    </location>
</feature>
<feature type="domain" description="J" evidence="6">
    <location>
        <begin position="104"/>
        <end position="165"/>
    </location>
</feature>
<feature type="domain" description="SEC63 1">
    <location>
        <begin position="197"/>
        <end position="542"/>
    </location>
</feature>
<feature type="domain" description="SEC63 2">
    <location>
        <begin position="638"/>
        <end position="715"/>
    </location>
</feature>
<feature type="region of interest" description="Disordered" evidence="7">
    <location>
        <begin position="492"/>
        <end position="618"/>
    </location>
</feature>
<feature type="region of interest" description="Disordered" evidence="7">
    <location>
        <begin position="720"/>
        <end position="761"/>
    </location>
</feature>
<feature type="coiled-coil region" evidence="5">
    <location>
        <begin position="598"/>
        <end position="636"/>
    </location>
</feature>
<feature type="compositionally biased region" description="Basic residues" evidence="7">
    <location>
        <begin position="518"/>
        <end position="537"/>
    </location>
</feature>
<feature type="compositionally biased region" description="Basic and acidic residues" evidence="7">
    <location>
        <begin position="583"/>
        <end position="609"/>
    </location>
</feature>
<feature type="compositionally biased region" description="Acidic residues" evidence="7">
    <location>
        <begin position="734"/>
        <end position="761"/>
    </location>
</feature>
<feature type="modified residue" description="Phosphothreonine" evidence="4">
    <location>
        <position position="538"/>
    </location>
</feature>
<feature type="modified residue" description="Phosphoserine" evidence="4">
    <location>
        <position position="743"/>
    </location>
</feature>
<feature type="modified residue" description="Phosphoserine" evidence="4">
    <location>
        <position position="749"/>
    </location>
</feature>
<dbReference type="EMBL" id="CR860636">
    <property type="protein sequence ID" value="CAH92756.1"/>
    <property type="molecule type" value="mRNA"/>
</dbReference>
<dbReference type="RefSeq" id="NP_001126607.1">
    <property type="nucleotide sequence ID" value="NM_001133135.1"/>
</dbReference>
<dbReference type="STRING" id="9601.ENSPPYP00000018910"/>
<dbReference type="GeneID" id="100173604"/>
<dbReference type="KEGG" id="pon:100173604"/>
<dbReference type="CTD" id="11231"/>
<dbReference type="eggNOG" id="KOG0721">
    <property type="taxonomic scope" value="Eukaryota"/>
</dbReference>
<dbReference type="HOGENOM" id="CLU_014210_1_0_1"/>
<dbReference type="InParanoid" id="Q5R660"/>
<dbReference type="OrthoDB" id="1734229at2759"/>
<dbReference type="Proteomes" id="UP000001595">
    <property type="component" value="Unplaced"/>
</dbReference>
<dbReference type="GO" id="GO:0031207">
    <property type="term" value="C:Sec62/Sec63 complex"/>
    <property type="evidence" value="ECO:0007669"/>
    <property type="project" value="TreeGrafter"/>
</dbReference>
<dbReference type="GO" id="GO:0008320">
    <property type="term" value="F:protein transmembrane transporter activity"/>
    <property type="evidence" value="ECO:0007669"/>
    <property type="project" value="TreeGrafter"/>
</dbReference>
<dbReference type="GO" id="GO:0003723">
    <property type="term" value="F:RNA binding"/>
    <property type="evidence" value="ECO:0007669"/>
    <property type="project" value="TreeGrafter"/>
</dbReference>
<dbReference type="GO" id="GO:0031204">
    <property type="term" value="P:post-translational protein targeting to membrane, translocation"/>
    <property type="evidence" value="ECO:0000250"/>
    <property type="project" value="UniProtKB"/>
</dbReference>
<dbReference type="GO" id="GO:0006614">
    <property type="term" value="P:SRP-dependent cotranslational protein targeting to membrane"/>
    <property type="evidence" value="ECO:0007669"/>
    <property type="project" value="TreeGrafter"/>
</dbReference>
<dbReference type="CDD" id="cd06257">
    <property type="entry name" value="DnaJ"/>
    <property type="match status" value="1"/>
</dbReference>
<dbReference type="FunFam" id="1.10.3380.10:FF:000003">
    <property type="entry name" value="SEC63 homolog, protein translocation regulator"/>
    <property type="match status" value="1"/>
</dbReference>
<dbReference type="FunFam" id="1.10.287.110:FF:000032">
    <property type="entry name" value="Translocation protein SEC63 homolog"/>
    <property type="match status" value="1"/>
</dbReference>
<dbReference type="FunFam" id="1.10.150.20:FF:000022">
    <property type="entry name" value="translocation protein SEC63 homolog"/>
    <property type="match status" value="1"/>
</dbReference>
<dbReference type="FunFam" id="2.60.40.150:FF:000072">
    <property type="entry name" value="translocation protein SEC63 homolog"/>
    <property type="match status" value="1"/>
</dbReference>
<dbReference type="Gene3D" id="1.10.150.20">
    <property type="entry name" value="5' to 3' exonuclease, C-terminal subdomain"/>
    <property type="match status" value="1"/>
</dbReference>
<dbReference type="Gene3D" id="2.60.40.150">
    <property type="entry name" value="C2 domain"/>
    <property type="match status" value="1"/>
</dbReference>
<dbReference type="Gene3D" id="1.10.287.110">
    <property type="entry name" value="DnaJ domain"/>
    <property type="match status" value="1"/>
</dbReference>
<dbReference type="Gene3D" id="1.10.3380.10">
    <property type="entry name" value="Sec63 N-terminal domain-like domain"/>
    <property type="match status" value="1"/>
</dbReference>
<dbReference type="InterPro" id="IPR035892">
    <property type="entry name" value="C2_domain_sf"/>
</dbReference>
<dbReference type="InterPro" id="IPR001623">
    <property type="entry name" value="DnaJ_domain"/>
</dbReference>
<dbReference type="InterPro" id="IPR014756">
    <property type="entry name" value="Ig_E-set"/>
</dbReference>
<dbReference type="InterPro" id="IPR036869">
    <property type="entry name" value="J_dom_sf"/>
</dbReference>
<dbReference type="InterPro" id="IPR004179">
    <property type="entry name" value="Sec63-dom"/>
</dbReference>
<dbReference type="PANTHER" id="PTHR24075">
    <property type="entry name" value="SEC63 DOMAIN-CONTAINING"/>
    <property type="match status" value="1"/>
</dbReference>
<dbReference type="PANTHER" id="PTHR24075:SF0">
    <property type="entry name" value="TRANSLOCATION PROTEIN SEC63 HOMOLOG"/>
    <property type="match status" value="1"/>
</dbReference>
<dbReference type="Pfam" id="PF00226">
    <property type="entry name" value="DnaJ"/>
    <property type="match status" value="1"/>
</dbReference>
<dbReference type="Pfam" id="PF02889">
    <property type="entry name" value="Sec63"/>
    <property type="match status" value="2"/>
</dbReference>
<dbReference type="PRINTS" id="PR00625">
    <property type="entry name" value="JDOMAIN"/>
</dbReference>
<dbReference type="SMART" id="SM00271">
    <property type="entry name" value="DnaJ"/>
    <property type="match status" value="1"/>
</dbReference>
<dbReference type="SMART" id="SM00973">
    <property type="entry name" value="Sec63"/>
    <property type="match status" value="1"/>
</dbReference>
<dbReference type="SUPFAM" id="SSF46565">
    <property type="entry name" value="Chaperone J-domain"/>
    <property type="match status" value="1"/>
</dbReference>
<dbReference type="SUPFAM" id="SSF81296">
    <property type="entry name" value="E set domains"/>
    <property type="match status" value="1"/>
</dbReference>
<dbReference type="SUPFAM" id="SSF158702">
    <property type="entry name" value="Sec63 N-terminal domain-like"/>
    <property type="match status" value="1"/>
</dbReference>
<dbReference type="PROSITE" id="PS50076">
    <property type="entry name" value="DNAJ_2"/>
    <property type="match status" value="1"/>
</dbReference>
<organism>
    <name type="scientific">Pongo abelii</name>
    <name type="common">Sumatran orangutan</name>
    <name type="synonym">Pongo pygmaeus abelii</name>
    <dbReference type="NCBI Taxonomy" id="9601"/>
    <lineage>
        <taxon>Eukaryota</taxon>
        <taxon>Metazoa</taxon>
        <taxon>Chordata</taxon>
        <taxon>Craniata</taxon>
        <taxon>Vertebrata</taxon>
        <taxon>Euteleostomi</taxon>
        <taxon>Mammalia</taxon>
        <taxon>Eutheria</taxon>
        <taxon>Euarchontoglires</taxon>
        <taxon>Primates</taxon>
        <taxon>Haplorrhini</taxon>
        <taxon>Catarrhini</taxon>
        <taxon>Hominidae</taxon>
        <taxon>Pongo</taxon>
    </lineage>
</organism>
<keyword id="KW-0143">Chaperone</keyword>
<keyword id="KW-0175">Coiled coil</keyword>
<keyword id="KW-0256">Endoplasmic reticulum</keyword>
<keyword id="KW-0472">Membrane</keyword>
<keyword id="KW-0597">Phosphoprotein</keyword>
<keyword id="KW-0653">Protein transport</keyword>
<keyword id="KW-1185">Reference proteome</keyword>
<keyword id="KW-0677">Repeat</keyword>
<keyword id="KW-0812">Transmembrane</keyword>
<keyword id="KW-1133">Transmembrane helix</keyword>
<keyword id="KW-0813">Transport</keyword>
<evidence type="ECO:0000250" key="1"/>
<evidence type="ECO:0000250" key="2">
    <source>
        <dbReference type="UniProtKB" id="P82008"/>
    </source>
</evidence>
<evidence type="ECO:0000250" key="3">
    <source>
        <dbReference type="UniProtKB" id="Q8VHE0"/>
    </source>
</evidence>
<evidence type="ECO:0000250" key="4">
    <source>
        <dbReference type="UniProtKB" id="Q9UGP8"/>
    </source>
</evidence>
<evidence type="ECO:0000255" key="5"/>
<evidence type="ECO:0000255" key="6">
    <source>
        <dbReference type="PROSITE-ProRule" id="PRU00286"/>
    </source>
</evidence>
<evidence type="ECO:0000256" key="7">
    <source>
        <dbReference type="SAM" id="MobiDB-lite"/>
    </source>
</evidence>
<proteinExistence type="evidence at transcript level"/>
<sequence length="761" mass="88125">MAGQQFQYDDSGNTFFYFLTSFVGLIVIPATYYLWPRDQNAEQIRLKNIRKVYGRCMWYRLRLLKPQPNIIPTVKKIVLLAGWALFLFLAYKVSKTDREYQEYNPYEVLNLDPGATVAEIKKQYRLLSLKYHPDKGGDEVMFMRIAKAYAALTDEESRKNWEEFGNPDGPQATSFGIALPAWIVDQKNSILVLLVYGLAFMVILPVVVGSWWYRSIRYSGDQILIRTTQIYTYFVYKTRNMDMKRLIMVLAGASEFDPQYNKDATSRPTDNILIPQLIREIGSINLKKNEPPLTCPYSLKARVLLLSHLARMKIPETLEEDQQFMLKKCPALLQEMVNVICQLIVMARNREEREFRAPTLASLENCMKLSQMAVQGLQQFKSPLLQLPHIEEDNLRRVSNHKKYKIKTIQDLVSLKESDRHTLLHFLEDEKYEEVMAVLGSFPYVTMDIKSQVLDDEDSNNITVGSLVTVLVKLTRQTMAEVFEKEQSICAAEEQPAEDGQGETNKNRTKGGWQQKSKGPKKTAKSKKKKKPLKKKPTPVLLPQSKQQKQKQANGVVGNEAAVKEDEEEVSDKGSDSEEEETNRDSQSEKDDGSDRDSDREQDEKQNKDDEAEWQELQQSIQRKERALLETKSKITHPVYSLYFPEEKQEWWWLYIADRKEQTLISMPYHVCTLKDTEEVELKFPAPGKPGNYQYTVFLRSDSYMGLDQIKPLKLEVHEAKPVPENHPQWDTAIEGDEDQEDSEGFEDSFEEEEEEEEDDD</sequence>
<name>SEC63_PONAB</name>
<gene>
    <name type="primary">SEC63</name>
    <name type="synonym">DNAJC23</name>
</gene>
<reference key="1">
    <citation type="submission" date="2004-11" db="EMBL/GenBank/DDBJ databases">
        <authorList>
            <consortium name="The German cDNA consortium"/>
        </authorList>
    </citation>
    <scope>NUCLEOTIDE SEQUENCE [LARGE SCALE MRNA]</scope>
    <source>
        <tissue>Brain cortex</tissue>
    </source>
</reference>
<protein>
    <recommendedName>
        <fullName>Translocation protein SEC63 homolog</fullName>
    </recommendedName>
    <alternativeName>
        <fullName>DnaJ homolog subfamily C member 23</fullName>
    </alternativeName>
</protein>